<name>RL34_SYNY3</name>
<evidence type="ECO:0000256" key="1">
    <source>
        <dbReference type="SAM" id="MobiDB-lite"/>
    </source>
</evidence>
<evidence type="ECO:0000305" key="2"/>
<gene>
    <name type="primary">rpmH</name>
    <name type="synonym">rpl34</name>
    <name type="ordered locus">smr0011</name>
</gene>
<dbReference type="EMBL" id="X81989">
    <property type="protein sequence ID" value="CAA57515.1"/>
    <property type="molecule type" value="Genomic_DNA"/>
</dbReference>
<dbReference type="EMBL" id="BA000022">
    <property type="protein sequence ID" value="BAA18241.1"/>
    <property type="molecule type" value="Genomic_DNA"/>
</dbReference>
<dbReference type="PIR" id="S75680">
    <property type="entry name" value="S75680"/>
</dbReference>
<dbReference type="SMR" id="Q55004"/>
<dbReference type="FunCoup" id="Q55004">
    <property type="interactions" value="238"/>
</dbReference>
<dbReference type="STRING" id="1148.gene:10499115"/>
<dbReference type="PaxDb" id="1148-1653326"/>
<dbReference type="EnsemblBacteria" id="BAA18241">
    <property type="protein sequence ID" value="BAA18241"/>
    <property type="gene ID" value="BAA18241"/>
</dbReference>
<dbReference type="KEGG" id="syn:smr0011"/>
<dbReference type="eggNOG" id="COG0230">
    <property type="taxonomic scope" value="Bacteria"/>
</dbReference>
<dbReference type="InParanoid" id="Q55004"/>
<dbReference type="PhylomeDB" id="Q55004"/>
<dbReference type="Proteomes" id="UP000001425">
    <property type="component" value="Chromosome"/>
</dbReference>
<dbReference type="GO" id="GO:1990904">
    <property type="term" value="C:ribonucleoprotein complex"/>
    <property type="evidence" value="ECO:0007669"/>
    <property type="project" value="UniProtKB-KW"/>
</dbReference>
<dbReference type="GO" id="GO:0005840">
    <property type="term" value="C:ribosome"/>
    <property type="evidence" value="ECO:0007669"/>
    <property type="project" value="UniProtKB-KW"/>
</dbReference>
<dbReference type="GO" id="GO:0003735">
    <property type="term" value="F:structural constituent of ribosome"/>
    <property type="evidence" value="ECO:0007669"/>
    <property type="project" value="InterPro"/>
</dbReference>
<dbReference type="GO" id="GO:0006412">
    <property type="term" value="P:translation"/>
    <property type="evidence" value="ECO:0007669"/>
    <property type="project" value="UniProtKB-UniRule"/>
</dbReference>
<dbReference type="Gene3D" id="1.10.287.3980">
    <property type="match status" value="1"/>
</dbReference>
<dbReference type="HAMAP" id="MF_00391">
    <property type="entry name" value="Ribosomal_bL34"/>
    <property type="match status" value="1"/>
</dbReference>
<dbReference type="InterPro" id="IPR000271">
    <property type="entry name" value="Ribosomal_bL34"/>
</dbReference>
<dbReference type="NCBIfam" id="TIGR01030">
    <property type="entry name" value="rpmH_bact"/>
    <property type="match status" value="1"/>
</dbReference>
<dbReference type="Pfam" id="PF00468">
    <property type="entry name" value="Ribosomal_L34"/>
    <property type="match status" value="1"/>
</dbReference>
<reference key="1">
    <citation type="journal article" date="1996" name="Eur. J. Biochem.">
        <title>Cloning, purification and characterization of the protein subunit of ribonuclease P from the cyanobacterium Synechocystis sp. PCC 6803.</title>
        <authorList>
            <person name="Pascual A."/>
            <person name="Vioque A."/>
        </authorList>
    </citation>
    <scope>NUCLEOTIDE SEQUENCE [GENOMIC DNA]</scope>
</reference>
<reference key="2">
    <citation type="journal article" date="1996" name="DNA Res.">
        <title>Sequence analysis of the genome of the unicellular cyanobacterium Synechocystis sp. strain PCC6803. II. Sequence determination of the entire genome and assignment of potential protein-coding regions.</title>
        <authorList>
            <person name="Kaneko T."/>
            <person name="Sato S."/>
            <person name="Kotani H."/>
            <person name="Tanaka A."/>
            <person name="Asamizu E."/>
            <person name="Nakamura Y."/>
            <person name="Miyajima N."/>
            <person name="Hirosawa M."/>
            <person name="Sugiura M."/>
            <person name="Sasamoto S."/>
            <person name="Kimura T."/>
            <person name="Hosouchi T."/>
            <person name="Matsuno A."/>
            <person name="Muraki A."/>
            <person name="Nakazaki N."/>
            <person name="Naruo K."/>
            <person name="Okumura S."/>
            <person name="Shimpo S."/>
            <person name="Takeuchi C."/>
            <person name="Wada T."/>
            <person name="Watanabe A."/>
            <person name="Yamada M."/>
            <person name="Yasuda M."/>
            <person name="Tabata S."/>
        </authorList>
    </citation>
    <scope>NUCLEOTIDE SEQUENCE [LARGE SCALE GENOMIC DNA]</scope>
    <source>
        <strain>ATCC 27184 / PCC 6803 / Kazusa</strain>
    </source>
</reference>
<proteinExistence type="inferred from homology"/>
<accession>Q55004</accession>
<protein>
    <recommendedName>
        <fullName evidence="2">Large ribosomal subunit protein bL34</fullName>
    </recommendedName>
    <alternativeName>
        <fullName>50S ribosomal protein L34</fullName>
    </alternativeName>
</protein>
<organism>
    <name type="scientific">Synechocystis sp. (strain ATCC 27184 / PCC 6803 / Kazusa)</name>
    <dbReference type="NCBI Taxonomy" id="1111708"/>
    <lineage>
        <taxon>Bacteria</taxon>
        <taxon>Bacillati</taxon>
        <taxon>Cyanobacteriota</taxon>
        <taxon>Cyanophyceae</taxon>
        <taxon>Synechococcales</taxon>
        <taxon>Merismopediaceae</taxon>
        <taxon>Synechocystis</taxon>
    </lineage>
</organism>
<feature type="chain" id="PRO_0000187486" description="Large ribosomal subunit protein bL34">
    <location>
        <begin position="1"/>
        <end position="45"/>
    </location>
</feature>
<feature type="region of interest" description="Disordered" evidence="1">
    <location>
        <begin position="1"/>
        <end position="45"/>
    </location>
</feature>
<feature type="compositionally biased region" description="Polar residues" evidence="1">
    <location>
        <begin position="1"/>
        <end position="10"/>
    </location>
</feature>
<feature type="compositionally biased region" description="Basic residues" evidence="1">
    <location>
        <begin position="11"/>
        <end position="45"/>
    </location>
</feature>
<keyword id="KW-1185">Reference proteome</keyword>
<keyword id="KW-0687">Ribonucleoprotein</keyword>
<keyword id="KW-0689">Ribosomal protein</keyword>
<sequence length="45" mass="5261">MTQRTLGGTNRKQKRTSGFRARMRTHNGRKVIQARRSKGRHRLAV</sequence>
<comment type="similarity">
    <text evidence="2">Belongs to the bacterial ribosomal protein bL34 family.</text>
</comment>